<dbReference type="EMBL" id="AF095689">
    <property type="protein sequence ID" value="AAF34053.1"/>
    <property type="molecule type" value="Genomic_DNA"/>
</dbReference>
<dbReference type="SMR" id="Q77TH1"/>
<dbReference type="Proteomes" id="UP000163220">
    <property type="component" value="Genome"/>
</dbReference>
<dbReference type="GO" id="GO:0003779">
    <property type="term" value="F:actin binding"/>
    <property type="evidence" value="ECO:0007669"/>
    <property type="project" value="UniProtKB-KW"/>
</dbReference>
<dbReference type="Gene3D" id="3.30.450.30">
    <property type="entry name" value="Dynein light chain 2a, cytoplasmic"/>
    <property type="match status" value="1"/>
</dbReference>
<dbReference type="InterPro" id="IPR048278">
    <property type="entry name" value="PFN"/>
</dbReference>
<dbReference type="InterPro" id="IPR005455">
    <property type="entry name" value="PFN_euk"/>
</dbReference>
<dbReference type="InterPro" id="IPR036140">
    <property type="entry name" value="PFN_sf"/>
</dbReference>
<dbReference type="InterPro" id="IPR027310">
    <property type="entry name" value="Profilin_CS"/>
</dbReference>
<dbReference type="Pfam" id="PF00235">
    <property type="entry name" value="Profilin"/>
    <property type="match status" value="1"/>
</dbReference>
<dbReference type="SMART" id="SM00392">
    <property type="entry name" value="PROF"/>
    <property type="match status" value="1"/>
</dbReference>
<dbReference type="SUPFAM" id="SSF55770">
    <property type="entry name" value="Profilin (actin-binding protein)"/>
    <property type="match status" value="1"/>
</dbReference>
<dbReference type="PROSITE" id="PS00414">
    <property type="entry name" value="PROFILIN"/>
    <property type="match status" value="1"/>
</dbReference>
<organism>
    <name type="scientific">Vaccinia virus (strain Tian Tan)</name>
    <name type="common">VACV</name>
    <dbReference type="NCBI Taxonomy" id="10253"/>
    <lineage>
        <taxon>Viruses</taxon>
        <taxon>Varidnaviria</taxon>
        <taxon>Bamfordvirae</taxon>
        <taxon>Nucleocytoviricota</taxon>
        <taxon>Pokkesviricetes</taxon>
        <taxon>Chitovirales</taxon>
        <taxon>Poxviridae</taxon>
        <taxon>Chordopoxvirinae</taxon>
        <taxon>Orthopoxvirus</taxon>
        <taxon>Vaccinia virus</taxon>
    </lineage>
</organism>
<protein>
    <recommendedName>
        <fullName>Profilin</fullName>
    </recommendedName>
</protein>
<reference key="1">
    <citation type="submission" date="1998-09" db="EMBL/GenBank/DDBJ databases">
        <title>Complete genomic sequence of vaccinia virus (Tian Tan strain).</title>
        <authorList>
            <person name="Jin Q."/>
            <person name="Hou Y.D."/>
            <person name="Cheng N.H."/>
            <person name="Yao E.M."/>
            <person name="Cheng S.X."/>
            <person name="Yang X.K."/>
            <person name="Jing D.Y."/>
            <person name="Yu W.H."/>
            <person name="Yuan J.S."/>
            <person name="Ma X.J."/>
        </authorList>
    </citation>
    <scope>NUCLEOTIDE SEQUENCE [LARGE SCALE GENOMIC DNA]</scope>
</reference>
<organismHost>
    <name type="scientific">Homo sapiens</name>
    <name type="common">Human</name>
    <dbReference type="NCBI Taxonomy" id="9606"/>
</organismHost>
<evidence type="ECO:0000250" key="1"/>
<evidence type="ECO:0000305" key="2"/>
<keyword id="KW-0009">Actin-binding</keyword>
<proteinExistence type="inferred from homology"/>
<comment type="function">
    <text evidence="1">More likely to influence phosphoinositide metabolism than actin assembly.</text>
</comment>
<comment type="similarity">
    <text evidence="2">Belongs to the profilin family.</text>
</comment>
<accession>Q77TH1</accession>
<feature type="chain" id="PRO_0000199682" description="Profilin">
    <location>
        <begin position="1"/>
        <end position="133"/>
    </location>
</feature>
<sequence length="133" mass="15052">MAEWHKIIEDISKNNKFEDAAIVDYKTTKNVLAAIPNRTFAKINPGEIIPLITNRNILKPLIGQKYCIVYTNSLMDENTYAMELLTGYAPVSPIVIARTHTALIFLMGKPTTSRRDVYRTCRDHATRVRATGN</sequence>
<gene>
    <name type="ORF">TA53R</name>
</gene>
<name>PROF_VACCT</name>